<comment type="function">
    <text evidence="1">Plays a role in cell envelope biogenesis, maintenance of cell envelope integrity and membrane homeostasis.</text>
</comment>
<comment type="subcellular location">
    <subcellularLocation>
        <location evidence="1">Cell inner membrane</location>
        <topology evidence="1">Multi-pass membrane protein</topology>
    </subcellularLocation>
</comment>
<comment type="similarity">
    <text evidence="1">Belongs to the YciB family.</text>
</comment>
<reference key="1">
    <citation type="journal article" date="2008" name="BMC Genomics">
        <title>Genomics of an extreme psychrophile, Psychromonas ingrahamii.</title>
        <authorList>
            <person name="Riley M."/>
            <person name="Staley J.T."/>
            <person name="Danchin A."/>
            <person name="Wang T.Z."/>
            <person name="Brettin T.S."/>
            <person name="Hauser L.J."/>
            <person name="Land M.L."/>
            <person name="Thompson L.S."/>
        </authorList>
    </citation>
    <scope>NUCLEOTIDE SEQUENCE [LARGE SCALE GENOMIC DNA]</scope>
    <source>
        <strain>DSM 17664 / CCUG 51855 / 37</strain>
    </source>
</reference>
<organism>
    <name type="scientific">Psychromonas ingrahamii (strain DSM 17664 / CCUG 51855 / 37)</name>
    <dbReference type="NCBI Taxonomy" id="357804"/>
    <lineage>
        <taxon>Bacteria</taxon>
        <taxon>Pseudomonadati</taxon>
        <taxon>Pseudomonadota</taxon>
        <taxon>Gammaproteobacteria</taxon>
        <taxon>Alteromonadales</taxon>
        <taxon>Psychromonadaceae</taxon>
        <taxon>Psychromonas</taxon>
    </lineage>
</organism>
<accession>A1STS8</accession>
<gene>
    <name evidence="1" type="primary">yciB</name>
    <name type="ordered locus">Ping_1054</name>
</gene>
<sequence>MKQFFEFIPLIIFFVVFKTTDIYIATGALIVSMGLMLAFNYYKDGKVEKMQVITFGMVLVFGTLTIVLHDDVFIKWKVTVVYALFSLALLVSQFFYKKPIIKQMLSKEINLPANIWNNLNMAWALLFAVLSAVNVYVAFSLSQETWVNFKVFGLLAITLAFTLLSGLYIYKYLPATAEKKISANKNPEE</sequence>
<feature type="chain" id="PRO_1000021046" description="Inner membrane-spanning protein YciB">
    <location>
        <begin position="1"/>
        <end position="189"/>
    </location>
</feature>
<feature type="transmembrane region" description="Helical" evidence="1">
    <location>
        <begin position="4"/>
        <end position="24"/>
    </location>
</feature>
<feature type="transmembrane region" description="Helical" evidence="1">
    <location>
        <begin position="53"/>
        <end position="73"/>
    </location>
</feature>
<feature type="transmembrane region" description="Helical" evidence="1">
    <location>
        <begin position="76"/>
        <end position="96"/>
    </location>
</feature>
<feature type="transmembrane region" description="Helical" evidence="1">
    <location>
        <begin position="121"/>
        <end position="141"/>
    </location>
</feature>
<feature type="transmembrane region" description="Helical" evidence="1">
    <location>
        <begin position="149"/>
        <end position="169"/>
    </location>
</feature>
<keyword id="KW-0997">Cell inner membrane</keyword>
<keyword id="KW-1003">Cell membrane</keyword>
<keyword id="KW-0472">Membrane</keyword>
<keyword id="KW-1185">Reference proteome</keyword>
<keyword id="KW-0812">Transmembrane</keyword>
<keyword id="KW-1133">Transmembrane helix</keyword>
<dbReference type="EMBL" id="CP000510">
    <property type="protein sequence ID" value="ABM02893.1"/>
    <property type="molecule type" value="Genomic_DNA"/>
</dbReference>
<dbReference type="RefSeq" id="WP_011769456.1">
    <property type="nucleotide sequence ID" value="NC_008709.1"/>
</dbReference>
<dbReference type="STRING" id="357804.Ping_1054"/>
<dbReference type="KEGG" id="pin:Ping_1054"/>
<dbReference type="eggNOG" id="COG2917">
    <property type="taxonomic scope" value="Bacteria"/>
</dbReference>
<dbReference type="HOGENOM" id="CLU_089554_2_0_6"/>
<dbReference type="OrthoDB" id="9788219at2"/>
<dbReference type="Proteomes" id="UP000000639">
    <property type="component" value="Chromosome"/>
</dbReference>
<dbReference type="GO" id="GO:0005886">
    <property type="term" value="C:plasma membrane"/>
    <property type="evidence" value="ECO:0007669"/>
    <property type="project" value="UniProtKB-SubCell"/>
</dbReference>
<dbReference type="HAMAP" id="MF_00189">
    <property type="entry name" value="YciB"/>
    <property type="match status" value="1"/>
</dbReference>
<dbReference type="InterPro" id="IPR006008">
    <property type="entry name" value="YciB"/>
</dbReference>
<dbReference type="NCBIfam" id="TIGR00997">
    <property type="entry name" value="ispZ"/>
    <property type="match status" value="1"/>
</dbReference>
<dbReference type="NCBIfam" id="NF001324">
    <property type="entry name" value="PRK00259.1-2"/>
    <property type="match status" value="1"/>
</dbReference>
<dbReference type="NCBIfam" id="NF001325">
    <property type="entry name" value="PRK00259.1-3"/>
    <property type="match status" value="1"/>
</dbReference>
<dbReference type="PANTHER" id="PTHR36917:SF1">
    <property type="entry name" value="INNER MEMBRANE-SPANNING PROTEIN YCIB"/>
    <property type="match status" value="1"/>
</dbReference>
<dbReference type="PANTHER" id="PTHR36917">
    <property type="entry name" value="INTRACELLULAR SEPTATION PROTEIN A-RELATED"/>
    <property type="match status" value="1"/>
</dbReference>
<dbReference type="Pfam" id="PF04279">
    <property type="entry name" value="IspA"/>
    <property type="match status" value="1"/>
</dbReference>
<evidence type="ECO:0000255" key="1">
    <source>
        <dbReference type="HAMAP-Rule" id="MF_00189"/>
    </source>
</evidence>
<protein>
    <recommendedName>
        <fullName evidence="1">Inner membrane-spanning protein YciB</fullName>
    </recommendedName>
</protein>
<proteinExistence type="inferred from homology"/>
<name>YCIB_PSYIN</name>